<gene>
    <name evidence="4" type="primary">phm3</name>
</gene>
<evidence type="ECO:0000255" key="1"/>
<evidence type="ECO:0000256" key="2">
    <source>
        <dbReference type="SAM" id="MobiDB-lite"/>
    </source>
</evidence>
<evidence type="ECO:0000269" key="3">
    <source>
    </source>
</evidence>
<evidence type="ECO:0000303" key="4">
    <source>
    </source>
</evidence>
<evidence type="ECO:0000305" key="5"/>
<protein>
    <recommendedName>
        <fullName evidence="4">MFS-type transporter phm3</fullName>
    </recommendedName>
    <alternativeName>
        <fullName evidence="4">Phomasetin biosynthesis cluster protein 3</fullName>
    </alternativeName>
</protein>
<proteinExistence type="inferred from homology"/>
<feature type="chain" id="PRO_0000453356" description="MFS-type transporter phm3">
    <location>
        <begin position="1"/>
        <end position="485"/>
    </location>
</feature>
<feature type="transmembrane region" description="Helical" evidence="1">
    <location>
        <begin position="55"/>
        <end position="75"/>
    </location>
</feature>
<feature type="transmembrane region" description="Helical" evidence="1">
    <location>
        <begin position="83"/>
        <end position="103"/>
    </location>
</feature>
<feature type="transmembrane region" description="Helical" evidence="1">
    <location>
        <begin position="113"/>
        <end position="133"/>
    </location>
</feature>
<feature type="transmembrane region" description="Helical" evidence="1">
    <location>
        <begin position="144"/>
        <end position="164"/>
    </location>
</feature>
<feature type="transmembrane region" description="Helical" evidence="1">
    <location>
        <begin position="175"/>
        <end position="195"/>
    </location>
</feature>
<feature type="transmembrane region" description="Helical" evidence="1">
    <location>
        <begin position="203"/>
        <end position="223"/>
    </location>
</feature>
<feature type="transmembrane region" description="Helical" evidence="1">
    <location>
        <begin position="278"/>
        <end position="298"/>
    </location>
</feature>
<feature type="transmembrane region" description="Helical" evidence="1">
    <location>
        <begin position="317"/>
        <end position="337"/>
    </location>
</feature>
<feature type="transmembrane region" description="Helical" evidence="1">
    <location>
        <begin position="357"/>
        <end position="377"/>
    </location>
</feature>
<feature type="transmembrane region" description="Helical" evidence="1">
    <location>
        <begin position="384"/>
        <end position="404"/>
    </location>
</feature>
<feature type="transmembrane region" description="Helical" evidence="1">
    <location>
        <begin position="421"/>
        <end position="441"/>
    </location>
</feature>
<feature type="transmembrane region" description="Helical" evidence="1">
    <location>
        <begin position="449"/>
        <end position="469"/>
    </location>
</feature>
<feature type="region of interest" description="Disordered" evidence="2">
    <location>
        <begin position="1"/>
        <end position="22"/>
    </location>
</feature>
<dbReference type="EMBL" id="LC361337">
    <property type="protein sequence ID" value="BBC43186.1"/>
    <property type="molecule type" value="Genomic_DNA"/>
</dbReference>
<dbReference type="GO" id="GO:0005886">
    <property type="term" value="C:plasma membrane"/>
    <property type="evidence" value="ECO:0007669"/>
    <property type="project" value="UniProtKB-SubCell"/>
</dbReference>
<dbReference type="GO" id="GO:0022857">
    <property type="term" value="F:transmembrane transporter activity"/>
    <property type="evidence" value="ECO:0007669"/>
    <property type="project" value="InterPro"/>
</dbReference>
<dbReference type="CDD" id="cd17323">
    <property type="entry name" value="MFS_Tpo1_MDR_like"/>
    <property type="match status" value="1"/>
</dbReference>
<dbReference type="FunFam" id="1.20.1250.20:FF:000011">
    <property type="entry name" value="MFS multidrug transporter, putative"/>
    <property type="match status" value="1"/>
</dbReference>
<dbReference type="Gene3D" id="1.20.1250.20">
    <property type="entry name" value="MFS general substrate transporter like domains"/>
    <property type="match status" value="1"/>
</dbReference>
<dbReference type="InterPro" id="IPR011701">
    <property type="entry name" value="MFS"/>
</dbReference>
<dbReference type="InterPro" id="IPR020846">
    <property type="entry name" value="MFS_dom"/>
</dbReference>
<dbReference type="InterPro" id="IPR036259">
    <property type="entry name" value="MFS_trans_sf"/>
</dbReference>
<dbReference type="PANTHER" id="PTHR23502">
    <property type="entry name" value="MAJOR FACILITATOR SUPERFAMILY"/>
    <property type="match status" value="1"/>
</dbReference>
<dbReference type="PANTHER" id="PTHR23502:SF135">
    <property type="entry name" value="MAJOR FACILITATOR SUPERFAMILY (MFS) PROFILE DOMAIN-CONTAINING PROTEIN-RELATED"/>
    <property type="match status" value="1"/>
</dbReference>
<dbReference type="Pfam" id="PF07690">
    <property type="entry name" value="MFS_1"/>
    <property type="match status" value="1"/>
</dbReference>
<dbReference type="SUPFAM" id="SSF103473">
    <property type="entry name" value="MFS general substrate transporter"/>
    <property type="match status" value="1"/>
</dbReference>
<dbReference type="PROSITE" id="PS50850">
    <property type="entry name" value="MFS"/>
    <property type="match status" value="1"/>
</dbReference>
<organism>
    <name type="scientific">Pyrenochaetopsis sp</name>
    <dbReference type="NCBI Taxonomy" id="1756125"/>
    <lineage>
        <taxon>Eukaryota</taxon>
        <taxon>Fungi</taxon>
        <taxon>Dikarya</taxon>
        <taxon>Ascomycota</taxon>
        <taxon>Pezizomycotina</taxon>
        <taxon>Dothideomycetes</taxon>
        <taxon>Pleosporomycetidae</taxon>
        <taxon>Pleosporales</taxon>
        <taxon>Pleosporineae</taxon>
        <taxon>Pyrenochaetopsidaceae</taxon>
        <taxon>Pyrenochaetopsis</taxon>
    </lineage>
</organism>
<name>PHM3_PYRSX</name>
<reference key="1">
    <citation type="journal article" date="2018" name="Angew. Chem. Int. Ed.">
        <title>Control of the stereochemical course of [4+2] cycloaddition during trans-decalin formation by Fsa2-family enzymes.</title>
        <authorList>
            <person name="Kato N."/>
            <person name="Nogawa T."/>
            <person name="Takita R."/>
            <person name="Kinugasa K."/>
            <person name="Kanai M."/>
            <person name="Uchiyama M."/>
            <person name="Osada H."/>
            <person name="Takahashi S."/>
        </authorList>
    </citation>
    <scope>NUCLEOTIDE SEQUENCE [GENOMIC DNA]</scope>
    <scope>FUNCTION</scope>
    <source>
        <strain>RK10-F058</strain>
    </source>
</reference>
<accession>A0A2Z5XAK5</accession>
<sequence length="485" mass="52729">MSLQDPTKEHNNTSPSPKDEKTDYVVDWDGAEDAANPRNWTTRTKTAHVLCVSGFTLYSNLAAVMFAPGAPLLVADFHITSTIVASLTVSIYILGFVFGPFLLASLSELYGRLWLYHICNLIYLAFTVGCALSTNTAMFLAFRFICGCAASGPMTIGGGTIADLYEAEERGKAMALFGLGPLLGPVIGPVVGGFVTEHLNWRWTFYLVLILAAIIAIAGAVIMRETFEPVLLERKAADERVRTGNRQLRARTSDGTRTANQLLLRAIIRPLKMLCVSPIVLSLSVYCAFLFGLTYLLFTTFPAVFGLTYQFSTEQEGLAFLGLGVGMIFGIALFAILSDKLLHQPRGGTLARPELRLVLMVWSSPLVPIGFFWYGWSAQSTTHWIVPIIGTAVIGIGAFLILMPAQLYLVDAFGTEGAASALAVNTGLRSLFGAVLPLAGPPLYSKLDLGWGNSVLAFIGLAFVPVPFVLYKYGETLRKRFPIDR</sequence>
<comment type="function">
    <text evidence="3">MFS-type transporter; part of the gene cluster that mediates the biosynthesis of the trans-fused decalin-containing tetramic acid phomasetin.</text>
</comment>
<comment type="subcellular location">
    <subcellularLocation>
        <location evidence="5">Cell membrane</location>
        <topology evidence="1">Multi-pass membrane protein</topology>
    </subcellularLocation>
</comment>
<comment type="similarity">
    <text evidence="5">Belongs to the major facilitator superfamily.</text>
</comment>
<keyword id="KW-1003">Cell membrane</keyword>
<keyword id="KW-0472">Membrane</keyword>
<keyword id="KW-0812">Transmembrane</keyword>
<keyword id="KW-1133">Transmembrane helix</keyword>
<keyword id="KW-0813">Transport</keyword>